<dbReference type="EMBL" id="CP000462">
    <property type="protein sequence ID" value="ABK38093.1"/>
    <property type="molecule type" value="Genomic_DNA"/>
</dbReference>
<dbReference type="RefSeq" id="WP_011704120.1">
    <property type="nucleotide sequence ID" value="NC_008570.1"/>
</dbReference>
<dbReference type="RefSeq" id="YP_854610.1">
    <property type="nucleotide sequence ID" value="NC_008570.1"/>
</dbReference>
<dbReference type="SMR" id="A0KEG0"/>
<dbReference type="STRING" id="380703.AHA_0088"/>
<dbReference type="EnsemblBacteria" id="ABK38093">
    <property type="protein sequence ID" value="ABK38093"/>
    <property type="gene ID" value="AHA_0088"/>
</dbReference>
<dbReference type="GeneID" id="4490983"/>
<dbReference type="KEGG" id="aha:AHA_0088"/>
<dbReference type="PATRIC" id="fig|380703.7.peg.79"/>
<dbReference type="eggNOG" id="COG1826">
    <property type="taxonomic scope" value="Bacteria"/>
</dbReference>
<dbReference type="HOGENOM" id="CLU_086034_1_0_6"/>
<dbReference type="OrthoDB" id="9816005at2"/>
<dbReference type="Proteomes" id="UP000000756">
    <property type="component" value="Chromosome"/>
</dbReference>
<dbReference type="GO" id="GO:0033281">
    <property type="term" value="C:TAT protein transport complex"/>
    <property type="evidence" value="ECO:0007669"/>
    <property type="project" value="UniProtKB-UniRule"/>
</dbReference>
<dbReference type="GO" id="GO:0008320">
    <property type="term" value="F:protein transmembrane transporter activity"/>
    <property type="evidence" value="ECO:0007669"/>
    <property type="project" value="UniProtKB-UniRule"/>
</dbReference>
<dbReference type="GO" id="GO:0043953">
    <property type="term" value="P:protein transport by the Tat complex"/>
    <property type="evidence" value="ECO:0007669"/>
    <property type="project" value="UniProtKB-UniRule"/>
</dbReference>
<dbReference type="Gene3D" id="1.20.5.3310">
    <property type="match status" value="1"/>
</dbReference>
<dbReference type="HAMAP" id="MF_00237">
    <property type="entry name" value="TatB"/>
    <property type="match status" value="1"/>
</dbReference>
<dbReference type="InterPro" id="IPR003369">
    <property type="entry name" value="TatA/B/E"/>
</dbReference>
<dbReference type="InterPro" id="IPR018448">
    <property type="entry name" value="TatB"/>
</dbReference>
<dbReference type="NCBIfam" id="TIGR01410">
    <property type="entry name" value="tatB"/>
    <property type="match status" value="1"/>
</dbReference>
<dbReference type="PANTHER" id="PTHR33162">
    <property type="entry name" value="SEC-INDEPENDENT PROTEIN TRANSLOCASE PROTEIN TATA, CHLOROPLASTIC"/>
    <property type="match status" value="1"/>
</dbReference>
<dbReference type="PANTHER" id="PTHR33162:SF1">
    <property type="entry name" value="SEC-INDEPENDENT PROTEIN TRANSLOCASE PROTEIN TATA, CHLOROPLASTIC"/>
    <property type="match status" value="1"/>
</dbReference>
<dbReference type="Pfam" id="PF02416">
    <property type="entry name" value="TatA_B_E"/>
    <property type="match status" value="1"/>
</dbReference>
<dbReference type="PRINTS" id="PR01506">
    <property type="entry name" value="TATBPROTEIN"/>
</dbReference>
<proteinExistence type="inferred from homology"/>
<comment type="function">
    <text evidence="1">Part of the twin-arginine translocation (Tat) system that transports large folded proteins containing a characteristic twin-arginine motif in their signal peptide across membranes. Together with TatC, TatB is part of a receptor directly interacting with Tat signal peptides. TatB may form an oligomeric binding site that transiently accommodates folded Tat precursor proteins before their translocation.</text>
</comment>
<comment type="subunit">
    <text evidence="1">The Tat system comprises two distinct complexes: a TatABC complex, containing multiple copies of TatA, TatB and TatC subunits, and a separate TatA complex, containing only TatA subunits. Substrates initially bind to the TatABC complex, which probably triggers association of the separate TatA complex to form the active translocon.</text>
</comment>
<comment type="subcellular location">
    <subcellularLocation>
        <location evidence="1">Cell inner membrane</location>
        <topology evidence="1">Single-pass membrane protein</topology>
    </subcellularLocation>
</comment>
<comment type="similarity">
    <text evidence="1">Belongs to the TatB family.</text>
</comment>
<accession>A0KEG0</accession>
<evidence type="ECO:0000255" key="1">
    <source>
        <dbReference type="HAMAP-Rule" id="MF_00237"/>
    </source>
</evidence>
<evidence type="ECO:0000256" key="2">
    <source>
        <dbReference type="SAM" id="MobiDB-lite"/>
    </source>
</evidence>
<name>TATB_AERHH</name>
<keyword id="KW-0997">Cell inner membrane</keyword>
<keyword id="KW-1003">Cell membrane</keyword>
<keyword id="KW-0472">Membrane</keyword>
<keyword id="KW-0653">Protein transport</keyword>
<keyword id="KW-1185">Reference proteome</keyword>
<keyword id="KW-0811">Translocation</keyword>
<keyword id="KW-0812">Transmembrane</keyword>
<keyword id="KW-1133">Transmembrane helix</keyword>
<keyword id="KW-0813">Transport</keyword>
<gene>
    <name evidence="1" type="primary">tatB</name>
    <name type="ordered locus">AHA_0088</name>
</gene>
<organism>
    <name type="scientific">Aeromonas hydrophila subsp. hydrophila (strain ATCC 7966 / DSM 30187 / BCRC 13018 / CCUG 14551 / JCM 1027 / KCTC 2358 / NCIMB 9240 / NCTC 8049)</name>
    <dbReference type="NCBI Taxonomy" id="380703"/>
    <lineage>
        <taxon>Bacteria</taxon>
        <taxon>Pseudomonadati</taxon>
        <taxon>Pseudomonadota</taxon>
        <taxon>Gammaproteobacteria</taxon>
        <taxon>Aeromonadales</taxon>
        <taxon>Aeromonadaceae</taxon>
        <taxon>Aeromonas</taxon>
    </lineage>
</organism>
<sequence length="147" mass="16165">MFDIGFWELVVIGVVALVVLGPERLPVAIRTASHWIRLIRSTANSVKAELEQELKLQDLHNDLKKAEQLQMNNLSPELQESIEQLKTAAQSVTRPYEQQNTIQPASAVAEVKEEPVAPISVATPDEEPTVIPAARAQPSAEQGEVKP</sequence>
<protein>
    <recommendedName>
        <fullName evidence="1">Sec-independent protein translocase protein TatB</fullName>
    </recommendedName>
</protein>
<feature type="chain" id="PRO_0000301137" description="Sec-independent protein translocase protein TatB">
    <location>
        <begin position="1"/>
        <end position="147"/>
    </location>
</feature>
<feature type="transmembrane region" description="Helical" evidence="1">
    <location>
        <begin position="1"/>
        <end position="21"/>
    </location>
</feature>
<feature type="region of interest" description="Disordered" evidence="2">
    <location>
        <begin position="114"/>
        <end position="147"/>
    </location>
</feature>
<reference key="1">
    <citation type="journal article" date="2006" name="J. Bacteriol.">
        <title>Genome sequence of Aeromonas hydrophila ATCC 7966T: jack of all trades.</title>
        <authorList>
            <person name="Seshadri R."/>
            <person name="Joseph S.W."/>
            <person name="Chopra A.K."/>
            <person name="Sha J."/>
            <person name="Shaw J."/>
            <person name="Graf J."/>
            <person name="Haft D.H."/>
            <person name="Wu M."/>
            <person name="Ren Q."/>
            <person name="Rosovitz M.J."/>
            <person name="Madupu R."/>
            <person name="Tallon L."/>
            <person name="Kim M."/>
            <person name="Jin S."/>
            <person name="Vuong H."/>
            <person name="Stine O.C."/>
            <person name="Ali A."/>
            <person name="Horneman A.J."/>
            <person name="Heidelberg J.F."/>
        </authorList>
    </citation>
    <scope>NUCLEOTIDE SEQUENCE [LARGE SCALE GENOMIC DNA]</scope>
    <source>
        <strain>ATCC 7966 / DSM 30187 / BCRC 13018 / CCUG 14551 / JCM 1027 / KCTC 2358 / NCIMB 9240 / NCTC 8049</strain>
    </source>
</reference>